<accession>Q3AXK1</accession>
<name>CCSA_SYNS9</name>
<evidence type="ECO:0000250" key="1"/>
<evidence type="ECO:0000255" key="2">
    <source>
        <dbReference type="HAMAP-Rule" id="MF_01391"/>
    </source>
</evidence>
<organism>
    <name type="scientific">Synechococcus sp. (strain CC9902)</name>
    <dbReference type="NCBI Taxonomy" id="316279"/>
    <lineage>
        <taxon>Bacteria</taxon>
        <taxon>Bacillati</taxon>
        <taxon>Cyanobacteriota</taxon>
        <taxon>Cyanophyceae</taxon>
        <taxon>Synechococcales</taxon>
        <taxon>Synechococcaceae</taxon>
        <taxon>Synechococcus</taxon>
    </lineage>
</organism>
<protein>
    <recommendedName>
        <fullName evidence="2">Cytochrome c biogenesis protein CcsA</fullName>
    </recommendedName>
</protein>
<proteinExistence type="inferred from homology"/>
<dbReference type="EMBL" id="CP000097">
    <property type="protein sequence ID" value="ABB26195.1"/>
    <property type="molecule type" value="Genomic_DNA"/>
</dbReference>
<dbReference type="SMR" id="Q3AXK1"/>
<dbReference type="STRING" id="316279.Syncc9902_1231"/>
<dbReference type="KEGG" id="sye:Syncc9902_1231"/>
<dbReference type="eggNOG" id="COG0755">
    <property type="taxonomic scope" value="Bacteria"/>
</dbReference>
<dbReference type="HOGENOM" id="CLU_049710_2_4_3"/>
<dbReference type="OrthoDB" id="9814290at2"/>
<dbReference type="Proteomes" id="UP000002712">
    <property type="component" value="Chromosome"/>
</dbReference>
<dbReference type="GO" id="GO:0031676">
    <property type="term" value="C:plasma membrane-derived thylakoid membrane"/>
    <property type="evidence" value="ECO:0007669"/>
    <property type="project" value="UniProtKB-SubCell"/>
</dbReference>
<dbReference type="GO" id="GO:0020037">
    <property type="term" value="F:heme binding"/>
    <property type="evidence" value="ECO:0007669"/>
    <property type="project" value="InterPro"/>
</dbReference>
<dbReference type="GO" id="GO:0017004">
    <property type="term" value="P:cytochrome complex assembly"/>
    <property type="evidence" value="ECO:0007669"/>
    <property type="project" value="UniProtKB-UniRule"/>
</dbReference>
<dbReference type="HAMAP" id="MF_01391">
    <property type="entry name" value="CytC_CcsA"/>
    <property type="match status" value="1"/>
</dbReference>
<dbReference type="InterPro" id="IPR002541">
    <property type="entry name" value="Cyt_c_assembly"/>
</dbReference>
<dbReference type="InterPro" id="IPR017562">
    <property type="entry name" value="Cyt_c_biogenesis_CcsA"/>
</dbReference>
<dbReference type="InterPro" id="IPR045062">
    <property type="entry name" value="Cyt_c_biogenesis_CcsA/CcmC"/>
</dbReference>
<dbReference type="NCBIfam" id="TIGR03144">
    <property type="entry name" value="cytochr_II_ccsB"/>
    <property type="match status" value="1"/>
</dbReference>
<dbReference type="PANTHER" id="PTHR30071:SF1">
    <property type="entry name" value="CYTOCHROME B_B6 PROTEIN-RELATED"/>
    <property type="match status" value="1"/>
</dbReference>
<dbReference type="PANTHER" id="PTHR30071">
    <property type="entry name" value="HEME EXPORTER PROTEIN C"/>
    <property type="match status" value="1"/>
</dbReference>
<dbReference type="Pfam" id="PF01578">
    <property type="entry name" value="Cytochrom_C_asm"/>
    <property type="match status" value="1"/>
</dbReference>
<sequence length="304" mass="33035">MLNAPFELVTSLGFAAFVLLLIALPIAFWSVSSDSRPGVVRLLVAVANLLLTAQLVLRWWQSGHFPISNLYESLCFLAWACTLTQLLVERAWPSPIVAAAATPMGLGCIAFASFALPDQLQSAAPLVPALRSSWLVMHVSVIMVSYAALLVGSLLSLAVLVMDRGEALQLRSSSIGSGGFRQAVTTPDSGFLELQSLEISTNEQLDSLSYRTITVGFLMLTVGIISGAVWANEAWGSYWSWDPKETWALICWLVYAAYLHTRLSRGWQGRRPALVAVVGLIVIAVCYIGVNLLGIGLHSYGWFF</sequence>
<keyword id="KW-0201">Cytochrome c-type biogenesis</keyword>
<keyword id="KW-0472">Membrane</keyword>
<keyword id="KW-1185">Reference proteome</keyword>
<keyword id="KW-0793">Thylakoid</keyword>
<keyword id="KW-0812">Transmembrane</keyword>
<keyword id="KW-1133">Transmembrane helix</keyword>
<gene>
    <name evidence="2" type="primary">ccsA</name>
    <name type="ordered locus">Syncc9902_1231</name>
</gene>
<reference key="1">
    <citation type="submission" date="2005-08" db="EMBL/GenBank/DDBJ databases">
        <title>Complete sequence of Synechococcus sp. CC9902.</title>
        <authorList>
            <person name="Copeland A."/>
            <person name="Lucas S."/>
            <person name="Lapidus A."/>
            <person name="Barry K."/>
            <person name="Detter J.C."/>
            <person name="Glavina T."/>
            <person name="Hammon N."/>
            <person name="Israni S."/>
            <person name="Pitluck S."/>
            <person name="Martinez M."/>
            <person name="Schmutz J."/>
            <person name="Larimer F."/>
            <person name="Land M."/>
            <person name="Kyrpides N."/>
            <person name="Ivanova N."/>
            <person name="Richardson P."/>
        </authorList>
    </citation>
    <scope>NUCLEOTIDE SEQUENCE [LARGE SCALE GENOMIC DNA]</scope>
    <source>
        <strain>CC9902</strain>
    </source>
</reference>
<comment type="function">
    <text evidence="2">Required during biogenesis of c-type cytochromes (cytochrome c6 and cytochrome f) at the step of heme attachment.</text>
</comment>
<comment type="subunit">
    <text evidence="1">May interact with ccs1.</text>
</comment>
<comment type="subcellular location">
    <subcellularLocation>
        <location evidence="2">Cellular thylakoid membrane</location>
        <topology evidence="2">Multi-pass membrane protein</topology>
    </subcellularLocation>
</comment>
<comment type="similarity">
    <text evidence="2">Belongs to the CcmF/CycK/Ccl1/NrfE/CcsA family.</text>
</comment>
<feature type="chain" id="PRO_0000353718" description="Cytochrome c biogenesis protein CcsA">
    <location>
        <begin position="1"/>
        <end position="304"/>
    </location>
</feature>
<feature type="transmembrane region" description="Helical" evidence="2">
    <location>
        <begin position="8"/>
        <end position="28"/>
    </location>
</feature>
<feature type="transmembrane region" description="Helical" evidence="2">
    <location>
        <begin position="37"/>
        <end position="57"/>
    </location>
</feature>
<feature type="transmembrane region" description="Helical" evidence="2">
    <location>
        <begin position="63"/>
        <end position="83"/>
    </location>
</feature>
<feature type="transmembrane region" description="Helical" evidence="2">
    <location>
        <begin position="96"/>
        <end position="116"/>
    </location>
</feature>
<feature type="transmembrane region" description="Helical" evidence="2">
    <location>
        <begin position="141"/>
        <end position="161"/>
    </location>
</feature>
<feature type="transmembrane region" description="Helical" evidence="2">
    <location>
        <begin position="212"/>
        <end position="232"/>
    </location>
</feature>
<feature type="transmembrane region" description="Helical" evidence="2">
    <location>
        <begin position="246"/>
        <end position="263"/>
    </location>
</feature>
<feature type="transmembrane region" description="Helical" evidence="2">
    <location>
        <begin position="275"/>
        <end position="295"/>
    </location>
</feature>